<sequence length="145" mass="15523">MAKKITGYIRLQIKAGEANPSPPVGPALGQHGVNIREFCESFNTATKNIEKGLPTPVIITVYADRTFSFITKTPPASVLLKKFVLKGKSGSARPNTEKVGKATRQQLEEIAKMKTPDLTAADLEAAIRTIAGTARSMGIDVEGVE</sequence>
<gene>
    <name evidence="1" type="primary">rplK</name>
    <name type="ordered locus">CBU_0226</name>
</gene>
<comment type="function">
    <text evidence="1">Forms part of the ribosomal stalk which helps the ribosome interact with GTP-bound translation factors.</text>
</comment>
<comment type="subunit">
    <text evidence="1">Part of the ribosomal stalk of the 50S ribosomal subunit. Interacts with L10 and the large rRNA to form the base of the stalk. L10 forms an elongated spine to which L12 dimers bind in a sequential fashion forming a multimeric L10(L12)X complex.</text>
</comment>
<comment type="PTM">
    <text evidence="1">One or more lysine residues are methylated.</text>
</comment>
<comment type="similarity">
    <text evidence="1">Belongs to the universal ribosomal protein uL11 family.</text>
</comment>
<protein>
    <recommendedName>
        <fullName evidence="1">Large ribosomal subunit protein uL11</fullName>
    </recommendedName>
    <alternativeName>
        <fullName evidence="2">50S ribosomal protein L11</fullName>
    </alternativeName>
</protein>
<name>RL11_COXBU</name>
<evidence type="ECO:0000255" key="1">
    <source>
        <dbReference type="HAMAP-Rule" id="MF_00736"/>
    </source>
</evidence>
<evidence type="ECO:0000305" key="2"/>
<proteinExistence type="inferred from homology"/>
<keyword id="KW-0488">Methylation</keyword>
<keyword id="KW-1185">Reference proteome</keyword>
<keyword id="KW-0687">Ribonucleoprotein</keyword>
<keyword id="KW-0689">Ribosomal protein</keyword>
<keyword id="KW-0694">RNA-binding</keyword>
<keyword id="KW-0699">rRNA-binding</keyword>
<reference key="1">
    <citation type="journal article" date="2003" name="Proc. Natl. Acad. Sci. U.S.A.">
        <title>Complete genome sequence of the Q-fever pathogen, Coxiella burnetii.</title>
        <authorList>
            <person name="Seshadri R."/>
            <person name="Paulsen I.T."/>
            <person name="Eisen J.A."/>
            <person name="Read T.D."/>
            <person name="Nelson K.E."/>
            <person name="Nelson W.C."/>
            <person name="Ward N.L."/>
            <person name="Tettelin H."/>
            <person name="Davidsen T.M."/>
            <person name="Beanan M.J."/>
            <person name="DeBoy R.T."/>
            <person name="Daugherty S.C."/>
            <person name="Brinkac L.M."/>
            <person name="Madupu R."/>
            <person name="Dodson R.J."/>
            <person name="Khouri H.M."/>
            <person name="Lee K.H."/>
            <person name="Carty H.A."/>
            <person name="Scanlan D."/>
            <person name="Heinzen R.A."/>
            <person name="Thompson H.A."/>
            <person name="Samuel J.E."/>
            <person name="Fraser C.M."/>
            <person name="Heidelberg J.F."/>
        </authorList>
    </citation>
    <scope>NUCLEOTIDE SEQUENCE [LARGE SCALE GENOMIC DNA]</scope>
    <source>
        <strain>RSA 493 / Nine Mile phase I</strain>
    </source>
</reference>
<organism>
    <name type="scientific">Coxiella burnetii (strain RSA 493 / Nine Mile phase I)</name>
    <dbReference type="NCBI Taxonomy" id="227377"/>
    <lineage>
        <taxon>Bacteria</taxon>
        <taxon>Pseudomonadati</taxon>
        <taxon>Pseudomonadota</taxon>
        <taxon>Gammaproteobacteria</taxon>
        <taxon>Legionellales</taxon>
        <taxon>Coxiellaceae</taxon>
        <taxon>Coxiella</taxon>
    </lineage>
</organism>
<accession>Q83ET4</accession>
<feature type="chain" id="PRO_0000104279" description="Large ribosomal subunit protein uL11">
    <location>
        <begin position="1"/>
        <end position="145"/>
    </location>
</feature>
<dbReference type="EMBL" id="AE016828">
    <property type="protein sequence ID" value="AAO89784.1"/>
    <property type="molecule type" value="Genomic_DNA"/>
</dbReference>
<dbReference type="RefSeq" id="NP_819270.1">
    <property type="nucleotide sequence ID" value="NC_002971.4"/>
</dbReference>
<dbReference type="RefSeq" id="WP_005771614.1">
    <property type="nucleotide sequence ID" value="NZ_CDBG01000001.1"/>
</dbReference>
<dbReference type="SMR" id="Q83ET4"/>
<dbReference type="STRING" id="227377.CBU_0226"/>
<dbReference type="DNASU" id="1208107"/>
<dbReference type="EnsemblBacteria" id="AAO89784">
    <property type="protein sequence ID" value="AAO89784"/>
    <property type="gene ID" value="CBU_0226"/>
</dbReference>
<dbReference type="GeneID" id="1208107"/>
<dbReference type="KEGG" id="cbu:CBU_0226"/>
<dbReference type="PATRIC" id="fig|227377.7.peg.220"/>
<dbReference type="eggNOG" id="COG0080">
    <property type="taxonomic scope" value="Bacteria"/>
</dbReference>
<dbReference type="HOGENOM" id="CLU_074237_2_0_6"/>
<dbReference type="OrthoDB" id="9802408at2"/>
<dbReference type="Proteomes" id="UP000002671">
    <property type="component" value="Chromosome"/>
</dbReference>
<dbReference type="GO" id="GO:0022625">
    <property type="term" value="C:cytosolic large ribosomal subunit"/>
    <property type="evidence" value="ECO:0000318"/>
    <property type="project" value="GO_Central"/>
</dbReference>
<dbReference type="GO" id="GO:0070180">
    <property type="term" value="F:large ribosomal subunit rRNA binding"/>
    <property type="evidence" value="ECO:0000318"/>
    <property type="project" value="GO_Central"/>
</dbReference>
<dbReference type="GO" id="GO:0003735">
    <property type="term" value="F:structural constituent of ribosome"/>
    <property type="evidence" value="ECO:0000318"/>
    <property type="project" value="GO_Central"/>
</dbReference>
<dbReference type="GO" id="GO:0006412">
    <property type="term" value="P:translation"/>
    <property type="evidence" value="ECO:0000318"/>
    <property type="project" value="GO_Central"/>
</dbReference>
<dbReference type="CDD" id="cd00349">
    <property type="entry name" value="Ribosomal_L11"/>
    <property type="match status" value="1"/>
</dbReference>
<dbReference type="FunFam" id="1.10.10.250:FF:000001">
    <property type="entry name" value="50S ribosomal protein L11"/>
    <property type="match status" value="1"/>
</dbReference>
<dbReference type="FunFam" id="3.30.1550.10:FF:000013">
    <property type="entry name" value="50S ribosomal protein L11"/>
    <property type="match status" value="1"/>
</dbReference>
<dbReference type="Gene3D" id="1.10.10.250">
    <property type="entry name" value="Ribosomal protein L11, C-terminal domain"/>
    <property type="match status" value="1"/>
</dbReference>
<dbReference type="Gene3D" id="3.30.1550.10">
    <property type="entry name" value="Ribosomal protein L11/L12, N-terminal domain"/>
    <property type="match status" value="1"/>
</dbReference>
<dbReference type="HAMAP" id="MF_00736">
    <property type="entry name" value="Ribosomal_uL11"/>
    <property type="match status" value="1"/>
</dbReference>
<dbReference type="InterPro" id="IPR000911">
    <property type="entry name" value="Ribosomal_uL11"/>
</dbReference>
<dbReference type="InterPro" id="IPR006519">
    <property type="entry name" value="Ribosomal_uL11_bac-typ"/>
</dbReference>
<dbReference type="InterPro" id="IPR020783">
    <property type="entry name" value="Ribosomal_uL11_C"/>
</dbReference>
<dbReference type="InterPro" id="IPR036769">
    <property type="entry name" value="Ribosomal_uL11_C_sf"/>
</dbReference>
<dbReference type="InterPro" id="IPR020785">
    <property type="entry name" value="Ribosomal_uL11_CS"/>
</dbReference>
<dbReference type="InterPro" id="IPR020784">
    <property type="entry name" value="Ribosomal_uL11_N"/>
</dbReference>
<dbReference type="InterPro" id="IPR036796">
    <property type="entry name" value="Ribosomal_uL11_N_sf"/>
</dbReference>
<dbReference type="NCBIfam" id="TIGR01632">
    <property type="entry name" value="L11_bact"/>
    <property type="match status" value="1"/>
</dbReference>
<dbReference type="PANTHER" id="PTHR11661">
    <property type="entry name" value="60S RIBOSOMAL PROTEIN L12"/>
    <property type="match status" value="1"/>
</dbReference>
<dbReference type="PANTHER" id="PTHR11661:SF1">
    <property type="entry name" value="LARGE RIBOSOMAL SUBUNIT PROTEIN UL11M"/>
    <property type="match status" value="1"/>
</dbReference>
<dbReference type="Pfam" id="PF00298">
    <property type="entry name" value="Ribosomal_L11"/>
    <property type="match status" value="1"/>
</dbReference>
<dbReference type="Pfam" id="PF03946">
    <property type="entry name" value="Ribosomal_L11_N"/>
    <property type="match status" value="1"/>
</dbReference>
<dbReference type="SMART" id="SM00649">
    <property type="entry name" value="RL11"/>
    <property type="match status" value="1"/>
</dbReference>
<dbReference type="SUPFAM" id="SSF54747">
    <property type="entry name" value="Ribosomal L11/L12e N-terminal domain"/>
    <property type="match status" value="1"/>
</dbReference>
<dbReference type="SUPFAM" id="SSF46906">
    <property type="entry name" value="Ribosomal protein L11, C-terminal domain"/>
    <property type="match status" value="1"/>
</dbReference>
<dbReference type="PROSITE" id="PS00359">
    <property type="entry name" value="RIBOSOMAL_L11"/>
    <property type="match status" value="1"/>
</dbReference>